<keyword id="KW-1185">Reference proteome</keyword>
<keyword id="KW-0687">Ribonucleoprotein</keyword>
<keyword id="KW-0689">Ribosomal protein</keyword>
<reference key="1">
    <citation type="submission" date="2005-08" db="EMBL/GenBank/DDBJ databases">
        <title>Complete sequence of Synechococcus sp. CC9902.</title>
        <authorList>
            <person name="Copeland A."/>
            <person name="Lucas S."/>
            <person name="Lapidus A."/>
            <person name="Barry K."/>
            <person name="Detter J.C."/>
            <person name="Glavina T."/>
            <person name="Hammon N."/>
            <person name="Israni S."/>
            <person name="Pitluck S."/>
            <person name="Martinez M."/>
            <person name="Schmutz J."/>
            <person name="Larimer F."/>
            <person name="Land M."/>
            <person name="Kyrpides N."/>
            <person name="Ivanova N."/>
            <person name="Richardson P."/>
        </authorList>
    </citation>
    <scope>NUCLEOTIDE SEQUENCE [LARGE SCALE GENOMIC DNA]</scope>
    <source>
        <strain>CC9902</strain>
    </source>
</reference>
<proteinExistence type="inferred from homology"/>
<sequence length="128" mass="13000">MSAKTDEILESLKSLSLLEASELVKQIEEAFGVSAAASAGVVMAAPGAAGGGEAAEEKTEFDVILESFEASAKIKVLKAVREATGLGLGDAKALVEAAPKLVKEGASKDDAEALKKAIEEVGGKVTIK</sequence>
<accession>Q3AUJ8</accession>
<evidence type="ECO:0000255" key="1">
    <source>
        <dbReference type="HAMAP-Rule" id="MF_00368"/>
    </source>
</evidence>
<evidence type="ECO:0000305" key="2"/>
<name>RL7_SYNS9</name>
<protein>
    <recommendedName>
        <fullName evidence="1">Large ribosomal subunit protein bL12</fullName>
    </recommendedName>
    <alternativeName>
        <fullName evidence="2">50S ribosomal protein L7/L12</fullName>
    </alternativeName>
</protein>
<gene>
    <name evidence="1" type="primary">rplL</name>
    <name evidence="1" type="synonym">rpl12</name>
    <name type="ordered locus">Syncc9902_2153</name>
</gene>
<feature type="chain" id="PRO_0000243510" description="Large ribosomal subunit protein bL12">
    <location>
        <begin position="1"/>
        <end position="128"/>
    </location>
</feature>
<organism>
    <name type="scientific">Synechococcus sp. (strain CC9902)</name>
    <dbReference type="NCBI Taxonomy" id="316279"/>
    <lineage>
        <taxon>Bacteria</taxon>
        <taxon>Bacillati</taxon>
        <taxon>Cyanobacteriota</taxon>
        <taxon>Cyanophyceae</taxon>
        <taxon>Synechococcales</taxon>
        <taxon>Synechococcaceae</taxon>
        <taxon>Synechococcus</taxon>
    </lineage>
</organism>
<dbReference type="EMBL" id="CP000097">
    <property type="protein sequence ID" value="ABB27111.1"/>
    <property type="molecule type" value="Genomic_DNA"/>
</dbReference>
<dbReference type="RefSeq" id="WP_011360893.1">
    <property type="nucleotide sequence ID" value="NC_007513.1"/>
</dbReference>
<dbReference type="SMR" id="Q3AUJ8"/>
<dbReference type="STRING" id="316279.Syncc9902_2153"/>
<dbReference type="KEGG" id="sye:Syncc9902_2153"/>
<dbReference type="eggNOG" id="COG0222">
    <property type="taxonomic scope" value="Bacteria"/>
</dbReference>
<dbReference type="HOGENOM" id="CLU_086499_3_0_3"/>
<dbReference type="OrthoDB" id="9811748at2"/>
<dbReference type="Proteomes" id="UP000002712">
    <property type="component" value="Chromosome"/>
</dbReference>
<dbReference type="GO" id="GO:0022625">
    <property type="term" value="C:cytosolic large ribosomal subunit"/>
    <property type="evidence" value="ECO:0007669"/>
    <property type="project" value="TreeGrafter"/>
</dbReference>
<dbReference type="GO" id="GO:0003729">
    <property type="term" value="F:mRNA binding"/>
    <property type="evidence" value="ECO:0007669"/>
    <property type="project" value="TreeGrafter"/>
</dbReference>
<dbReference type="GO" id="GO:0003735">
    <property type="term" value="F:structural constituent of ribosome"/>
    <property type="evidence" value="ECO:0007669"/>
    <property type="project" value="InterPro"/>
</dbReference>
<dbReference type="GO" id="GO:0006412">
    <property type="term" value="P:translation"/>
    <property type="evidence" value="ECO:0007669"/>
    <property type="project" value="UniProtKB-UniRule"/>
</dbReference>
<dbReference type="CDD" id="cd00387">
    <property type="entry name" value="Ribosomal_L7_L12"/>
    <property type="match status" value="1"/>
</dbReference>
<dbReference type="FunFam" id="3.30.1390.10:FF:000001">
    <property type="entry name" value="50S ribosomal protein L7/L12"/>
    <property type="match status" value="1"/>
</dbReference>
<dbReference type="Gene3D" id="3.30.1390.10">
    <property type="match status" value="1"/>
</dbReference>
<dbReference type="Gene3D" id="1.20.5.710">
    <property type="entry name" value="Single helix bin"/>
    <property type="match status" value="1"/>
</dbReference>
<dbReference type="HAMAP" id="MF_00368">
    <property type="entry name" value="Ribosomal_bL12"/>
    <property type="match status" value="1"/>
</dbReference>
<dbReference type="InterPro" id="IPR000206">
    <property type="entry name" value="Ribosomal_bL12"/>
</dbReference>
<dbReference type="InterPro" id="IPR013823">
    <property type="entry name" value="Ribosomal_bL12_C"/>
</dbReference>
<dbReference type="InterPro" id="IPR014719">
    <property type="entry name" value="Ribosomal_bL12_C/ClpS-like"/>
</dbReference>
<dbReference type="InterPro" id="IPR008932">
    <property type="entry name" value="Ribosomal_bL12_oligo"/>
</dbReference>
<dbReference type="InterPro" id="IPR036235">
    <property type="entry name" value="Ribosomal_bL12_oligo_N_sf"/>
</dbReference>
<dbReference type="NCBIfam" id="TIGR00855">
    <property type="entry name" value="L12"/>
    <property type="match status" value="1"/>
</dbReference>
<dbReference type="PANTHER" id="PTHR45987">
    <property type="entry name" value="39S RIBOSOMAL PROTEIN L12"/>
    <property type="match status" value="1"/>
</dbReference>
<dbReference type="PANTHER" id="PTHR45987:SF4">
    <property type="entry name" value="LARGE RIBOSOMAL SUBUNIT PROTEIN BL12M"/>
    <property type="match status" value="1"/>
</dbReference>
<dbReference type="Pfam" id="PF00542">
    <property type="entry name" value="Ribosomal_L12"/>
    <property type="match status" value="1"/>
</dbReference>
<dbReference type="Pfam" id="PF16320">
    <property type="entry name" value="Ribosomal_L12_N"/>
    <property type="match status" value="1"/>
</dbReference>
<dbReference type="SUPFAM" id="SSF54736">
    <property type="entry name" value="ClpS-like"/>
    <property type="match status" value="1"/>
</dbReference>
<dbReference type="SUPFAM" id="SSF48300">
    <property type="entry name" value="Ribosomal protein L7/12, oligomerisation (N-terminal) domain"/>
    <property type="match status" value="1"/>
</dbReference>
<comment type="function">
    <text evidence="1">Forms part of the ribosomal stalk which helps the ribosome interact with GTP-bound translation factors. Is thus essential for accurate translation.</text>
</comment>
<comment type="subunit">
    <text evidence="1">Homodimer. Part of the ribosomal stalk of the 50S ribosomal subunit. Forms a multimeric L10(L12)X complex, where L10 forms an elongated spine to which 2 to 4 L12 dimers bind in a sequential fashion. Binds GTP-bound translation factors.</text>
</comment>
<comment type="similarity">
    <text evidence="1">Belongs to the bacterial ribosomal protein bL12 family.</text>
</comment>